<sequence length="562" mass="62537">MKAPVRALICQGIEALRSNGTLPTNTLPPDFVVERPKTRKHGDFATNVAMLLSKATGSNPRLLAQTLVAALPTSADIARIEIAGPGFINFHLHPVAYQRETINVLKQDNDYGRNLSGQSRTVGVEYVSANPTGPLHVGHGRAAAIGDCLARLLEANGWNVKREFYYNDAGVQIENLVRSVQARARGLKPGDALWPTDAYNGEYIADIAKAYLAGDSINMVDTIITSTKNVDDTAAIHHFAVNYLRNEQNHDLAAFNVDFDIYFLESSLYKDGKVEETVQKLINSGHTYEEGGALWLKSTHFGDDKDRVMRKSDGSYTYFVPDIAYHLSKWQRGYERAITELGADHHGSLARVHAGLQALEIGIPPGWPEYVLHQMVTVMRGGEEVKLSKRSGGYVTLRDLIEETSTDATRWFLIARKPDSQLTFDIDLARQKSNDNPVFYVQYAYARVCSLMHQAHEKNLNYDQTSGMASLDQLSDNTSLCLMIEISRYPEIVQIACELLEPHLIAQYLRELAHAFHTWYHNTPVLVENAVERNAKLTLACATRQVLANGLNLLGVGTPEKM</sequence>
<comment type="catalytic activity">
    <reaction evidence="1">
        <text>tRNA(Arg) + L-arginine + ATP = L-arginyl-tRNA(Arg) + AMP + diphosphate</text>
        <dbReference type="Rhea" id="RHEA:20301"/>
        <dbReference type="Rhea" id="RHEA-COMP:9658"/>
        <dbReference type="Rhea" id="RHEA-COMP:9673"/>
        <dbReference type="ChEBI" id="CHEBI:30616"/>
        <dbReference type="ChEBI" id="CHEBI:32682"/>
        <dbReference type="ChEBI" id="CHEBI:33019"/>
        <dbReference type="ChEBI" id="CHEBI:78442"/>
        <dbReference type="ChEBI" id="CHEBI:78513"/>
        <dbReference type="ChEBI" id="CHEBI:456215"/>
        <dbReference type="EC" id="6.1.1.19"/>
    </reaction>
</comment>
<comment type="subunit">
    <text evidence="1">Monomer.</text>
</comment>
<comment type="subcellular location">
    <subcellularLocation>
        <location evidence="1">Cytoplasm</location>
    </subcellularLocation>
</comment>
<comment type="similarity">
    <text evidence="1">Belongs to the class-I aminoacyl-tRNA synthetase family.</text>
</comment>
<reference key="1">
    <citation type="journal article" date="2010" name="J. Bacteriol.">
        <title>Whole genome sequences of two Xylella fastidiosa strains (M12 and M23) causing almond leaf scorch disease in California.</title>
        <authorList>
            <person name="Chen J."/>
            <person name="Xie G."/>
            <person name="Han S."/>
            <person name="Chertkov O."/>
            <person name="Sims D."/>
            <person name="Civerolo E.L."/>
        </authorList>
    </citation>
    <scope>NUCLEOTIDE SEQUENCE [LARGE SCALE GENOMIC DNA]</scope>
    <source>
        <strain>M23</strain>
    </source>
</reference>
<accession>B2I6M4</accession>
<dbReference type="EC" id="6.1.1.19" evidence="1"/>
<dbReference type="EMBL" id="CP001011">
    <property type="protein sequence ID" value="ACB91566.1"/>
    <property type="molecule type" value="Genomic_DNA"/>
</dbReference>
<dbReference type="RefSeq" id="WP_011097507.1">
    <property type="nucleotide sequence ID" value="NC_010577.1"/>
</dbReference>
<dbReference type="SMR" id="B2I6M4"/>
<dbReference type="GeneID" id="93903807"/>
<dbReference type="KEGG" id="xfn:XfasM23_0109"/>
<dbReference type="HOGENOM" id="CLU_006406_0_1_6"/>
<dbReference type="Proteomes" id="UP000001698">
    <property type="component" value="Chromosome"/>
</dbReference>
<dbReference type="GO" id="GO:0005737">
    <property type="term" value="C:cytoplasm"/>
    <property type="evidence" value="ECO:0007669"/>
    <property type="project" value="UniProtKB-SubCell"/>
</dbReference>
<dbReference type="GO" id="GO:0004814">
    <property type="term" value="F:arginine-tRNA ligase activity"/>
    <property type="evidence" value="ECO:0007669"/>
    <property type="project" value="UniProtKB-UniRule"/>
</dbReference>
<dbReference type="GO" id="GO:0005524">
    <property type="term" value="F:ATP binding"/>
    <property type="evidence" value="ECO:0007669"/>
    <property type="project" value="UniProtKB-UniRule"/>
</dbReference>
<dbReference type="GO" id="GO:0006420">
    <property type="term" value="P:arginyl-tRNA aminoacylation"/>
    <property type="evidence" value="ECO:0007669"/>
    <property type="project" value="UniProtKB-UniRule"/>
</dbReference>
<dbReference type="CDD" id="cd00671">
    <property type="entry name" value="ArgRS_core"/>
    <property type="match status" value="1"/>
</dbReference>
<dbReference type="FunFam" id="1.10.730.10:FF:000008">
    <property type="entry name" value="Arginine--tRNA ligase"/>
    <property type="match status" value="1"/>
</dbReference>
<dbReference type="FunFam" id="3.30.1360.70:FF:000003">
    <property type="entry name" value="Arginine--tRNA ligase"/>
    <property type="match status" value="1"/>
</dbReference>
<dbReference type="FunFam" id="3.40.50.620:FF:000062">
    <property type="entry name" value="Arginine--tRNA ligase"/>
    <property type="match status" value="1"/>
</dbReference>
<dbReference type="Gene3D" id="3.30.1360.70">
    <property type="entry name" value="Arginyl tRNA synthetase N-terminal domain"/>
    <property type="match status" value="1"/>
</dbReference>
<dbReference type="Gene3D" id="3.40.50.620">
    <property type="entry name" value="HUPs"/>
    <property type="match status" value="1"/>
</dbReference>
<dbReference type="Gene3D" id="1.10.730.10">
    <property type="entry name" value="Isoleucyl-tRNA Synthetase, Domain 1"/>
    <property type="match status" value="1"/>
</dbReference>
<dbReference type="HAMAP" id="MF_00123">
    <property type="entry name" value="Arg_tRNA_synth"/>
    <property type="match status" value="1"/>
</dbReference>
<dbReference type="InterPro" id="IPR001412">
    <property type="entry name" value="aa-tRNA-synth_I_CS"/>
</dbReference>
<dbReference type="InterPro" id="IPR001278">
    <property type="entry name" value="Arg-tRNA-ligase"/>
</dbReference>
<dbReference type="InterPro" id="IPR005148">
    <property type="entry name" value="Arg-tRNA-synth_N"/>
</dbReference>
<dbReference type="InterPro" id="IPR036695">
    <property type="entry name" value="Arg-tRNA-synth_N_sf"/>
</dbReference>
<dbReference type="InterPro" id="IPR035684">
    <property type="entry name" value="ArgRS_core"/>
</dbReference>
<dbReference type="InterPro" id="IPR008909">
    <property type="entry name" value="DALR_anticod-bd"/>
</dbReference>
<dbReference type="InterPro" id="IPR014729">
    <property type="entry name" value="Rossmann-like_a/b/a_fold"/>
</dbReference>
<dbReference type="InterPro" id="IPR009080">
    <property type="entry name" value="tRNAsynth_Ia_anticodon-bd"/>
</dbReference>
<dbReference type="NCBIfam" id="TIGR00456">
    <property type="entry name" value="argS"/>
    <property type="match status" value="1"/>
</dbReference>
<dbReference type="PANTHER" id="PTHR11956:SF5">
    <property type="entry name" value="ARGININE--TRNA LIGASE, CYTOPLASMIC"/>
    <property type="match status" value="1"/>
</dbReference>
<dbReference type="PANTHER" id="PTHR11956">
    <property type="entry name" value="ARGINYL-TRNA SYNTHETASE"/>
    <property type="match status" value="1"/>
</dbReference>
<dbReference type="Pfam" id="PF03485">
    <property type="entry name" value="Arg_tRNA_synt_N"/>
    <property type="match status" value="1"/>
</dbReference>
<dbReference type="Pfam" id="PF05746">
    <property type="entry name" value="DALR_1"/>
    <property type="match status" value="1"/>
</dbReference>
<dbReference type="Pfam" id="PF00750">
    <property type="entry name" value="tRNA-synt_1d"/>
    <property type="match status" value="1"/>
</dbReference>
<dbReference type="PRINTS" id="PR01038">
    <property type="entry name" value="TRNASYNTHARG"/>
</dbReference>
<dbReference type="SMART" id="SM01016">
    <property type="entry name" value="Arg_tRNA_synt_N"/>
    <property type="match status" value="1"/>
</dbReference>
<dbReference type="SMART" id="SM00836">
    <property type="entry name" value="DALR_1"/>
    <property type="match status" value="1"/>
</dbReference>
<dbReference type="SUPFAM" id="SSF47323">
    <property type="entry name" value="Anticodon-binding domain of a subclass of class I aminoacyl-tRNA synthetases"/>
    <property type="match status" value="1"/>
</dbReference>
<dbReference type="SUPFAM" id="SSF55190">
    <property type="entry name" value="Arginyl-tRNA synthetase (ArgRS), N-terminal 'additional' domain"/>
    <property type="match status" value="1"/>
</dbReference>
<dbReference type="SUPFAM" id="SSF52374">
    <property type="entry name" value="Nucleotidylyl transferase"/>
    <property type="match status" value="1"/>
</dbReference>
<dbReference type="PROSITE" id="PS00178">
    <property type="entry name" value="AA_TRNA_LIGASE_I"/>
    <property type="match status" value="1"/>
</dbReference>
<feature type="chain" id="PRO_1000095423" description="Arginine--tRNA ligase">
    <location>
        <begin position="1"/>
        <end position="562"/>
    </location>
</feature>
<feature type="short sequence motif" description="'HIGH' region">
    <location>
        <begin position="129"/>
        <end position="139"/>
    </location>
</feature>
<proteinExistence type="inferred from homology"/>
<name>SYR_XYLF2</name>
<gene>
    <name evidence="1" type="primary">argS</name>
    <name type="ordered locus">XfasM23_0109</name>
</gene>
<protein>
    <recommendedName>
        <fullName evidence="1">Arginine--tRNA ligase</fullName>
        <ecNumber evidence="1">6.1.1.19</ecNumber>
    </recommendedName>
    <alternativeName>
        <fullName evidence="1">Arginyl-tRNA synthetase</fullName>
        <shortName evidence="1">ArgRS</shortName>
    </alternativeName>
</protein>
<keyword id="KW-0030">Aminoacyl-tRNA synthetase</keyword>
<keyword id="KW-0067">ATP-binding</keyword>
<keyword id="KW-0963">Cytoplasm</keyword>
<keyword id="KW-0436">Ligase</keyword>
<keyword id="KW-0547">Nucleotide-binding</keyword>
<keyword id="KW-0648">Protein biosynthesis</keyword>
<organism>
    <name type="scientific">Xylella fastidiosa (strain M23)</name>
    <dbReference type="NCBI Taxonomy" id="405441"/>
    <lineage>
        <taxon>Bacteria</taxon>
        <taxon>Pseudomonadati</taxon>
        <taxon>Pseudomonadota</taxon>
        <taxon>Gammaproteobacteria</taxon>
        <taxon>Lysobacterales</taxon>
        <taxon>Lysobacteraceae</taxon>
        <taxon>Xylella</taxon>
    </lineage>
</organism>
<evidence type="ECO:0000255" key="1">
    <source>
        <dbReference type="HAMAP-Rule" id="MF_00123"/>
    </source>
</evidence>